<protein>
    <recommendedName>
        <fullName evidence="1">Uracil phosphoribosyltransferase</fullName>
        <ecNumber evidence="1">2.4.2.9</ecNumber>
    </recommendedName>
    <alternativeName>
        <fullName evidence="1">UMP pyrophosphorylase</fullName>
    </alternativeName>
    <alternativeName>
        <fullName evidence="1">UPRTase</fullName>
    </alternativeName>
</protein>
<keyword id="KW-0021">Allosteric enzyme</keyword>
<keyword id="KW-0328">Glycosyltransferase</keyword>
<keyword id="KW-0342">GTP-binding</keyword>
<keyword id="KW-0460">Magnesium</keyword>
<keyword id="KW-0547">Nucleotide-binding</keyword>
<keyword id="KW-0808">Transferase</keyword>
<feature type="chain" id="PRO_1000085620" description="Uracil phosphoribosyltransferase">
    <location>
        <begin position="1"/>
        <end position="209"/>
    </location>
</feature>
<feature type="binding site" evidence="1">
    <location>
        <position position="79"/>
    </location>
    <ligand>
        <name>5-phospho-alpha-D-ribose 1-diphosphate</name>
        <dbReference type="ChEBI" id="CHEBI:58017"/>
    </ligand>
</feature>
<feature type="binding site" evidence="1">
    <location>
        <position position="104"/>
    </location>
    <ligand>
        <name>5-phospho-alpha-D-ribose 1-diphosphate</name>
        <dbReference type="ChEBI" id="CHEBI:58017"/>
    </ligand>
</feature>
<feature type="binding site" evidence="1">
    <location>
        <begin position="131"/>
        <end position="139"/>
    </location>
    <ligand>
        <name>5-phospho-alpha-D-ribose 1-diphosphate</name>
        <dbReference type="ChEBI" id="CHEBI:58017"/>
    </ligand>
</feature>
<feature type="binding site" evidence="1">
    <location>
        <position position="194"/>
    </location>
    <ligand>
        <name>uracil</name>
        <dbReference type="ChEBI" id="CHEBI:17568"/>
    </ligand>
</feature>
<feature type="binding site" evidence="1">
    <location>
        <begin position="199"/>
        <end position="201"/>
    </location>
    <ligand>
        <name>uracil</name>
        <dbReference type="ChEBI" id="CHEBI:17568"/>
    </ligand>
</feature>
<feature type="binding site" evidence="1">
    <location>
        <position position="200"/>
    </location>
    <ligand>
        <name>5-phospho-alpha-D-ribose 1-diphosphate</name>
        <dbReference type="ChEBI" id="CHEBI:58017"/>
    </ligand>
</feature>
<sequence length="209" mass="22980">MGKLYVFDHPLIQHKITYIRDKNTGTKEFRELVDEVASLMAFEITRDLPLEEIEIETPVSKAKTKVIAGKKLGLIPILRAGLGMVDGILKLIPAAKVGHIGLYRDPKTLQPVEYYVKLPTDVEERDFIVLDPMLATGGSAAEAINSLKKRGAKHIKLMCIVAAPEGVKVVQEEHPDVDIYVAALDEKLNDHGYVVPGLGDAGDRLFGTK</sequence>
<name>UPP_BACCN</name>
<reference key="1">
    <citation type="journal article" date="2008" name="Chem. Biol. Interact.">
        <title>Extending the Bacillus cereus group genomics to putative food-borne pathogens of different toxicity.</title>
        <authorList>
            <person name="Lapidus A."/>
            <person name="Goltsman E."/>
            <person name="Auger S."/>
            <person name="Galleron N."/>
            <person name="Segurens B."/>
            <person name="Dossat C."/>
            <person name="Land M.L."/>
            <person name="Broussolle V."/>
            <person name="Brillard J."/>
            <person name="Guinebretiere M.-H."/>
            <person name="Sanchis V."/>
            <person name="Nguen-the C."/>
            <person name="Lereclus D."/>
            <person name="Richardson P."/>
            <person name="Wincker P."/>
            <person name="Weissenbach J."/>
            <person name="Ehrlich S.D."/>
            <person name="Sorokin A."/>
        </authorList>
    </citation>
    <scope>NUCLEOTIDE SEQUENCE [LARGE SCALE GENOMIC DNA]</scope>
    <source>
        <strain>DSM 22905 / CIP 110041 / 391-98 / NVH 391-98</strain>
    </source>
</reference>
<proteinExistence type="inferred from homology"/>
<evidence type="ECO:0000255" key="1">
    <source>
        <dbReference type="HAMAP-Rule" id="MF_01218"/>
    </source>
</evidence>
<comment type="function">
    <text evidence="1">Catalyzes the conversion of uracil and 5-phospho-alpha-D-ribose 1-diphosphate (PRPP) to UMP and diphosphate.</text>
</comment>
<comment type="catalytic activity">
    <reaction evidence="1">
        <text>UMP + diphosphate = 5-phospho-alpha-D-ribose 1-diphosphate + uracil</text>
        <dbReference type="Rhea" id="RHEA:13017"/>
        <dbReference type="ChEBI" id="CHEBI:17568"/>
        <dbReference type="ChEBI" id="CHEBI:33019"/>
        <dbReference type="ChEBI" id="CHEBI:57865"/>
        <dbReference type="ChEBI" id="CHEBI:58017"/>
        <dbReference type="EC" id="2.4.2.9"/>
    </reaction>
</comment>
<comment type="cofactor">
    <cofactor evidence="1">
        <name>Mg(2+)</name>
        <dbReference type="ChEBI" id="CHEBI:18420"/>
    </cofactor>
    <text evidence="1">Binds 1 Mg(2+) ion per subunit. The magnesium is bound as Mg-PRPP.</text>
</comment>
<comment type="activity regulation">
    <text evidence="1">Allosterically activated by GTP.</text>
</comment>
<comment type="pathway">
    <text evidence="1">Pyrimidine metabolism; UMP biosynthesis via salvage pathway; UMP from uracil: step 1/1.</text>
</comment>
<comment type="similarity">
    <text evidence="1">Belongs to the UPRTase family.</text>
</comment>
<gene>
    <name evidence="1" type="primary">upp</name>
    <name type="ordered locus">Bcer98_3834</name>
</gene>
<organism>
    <name type="scientific">Bacillus cytotoxicus (strain DSM 22905 / CIP 110041 / 391-98 / NVH 391-98)</name>
    <dbReference type="NCBI Taxonomy" id="315749"/>
    <lineage>
        <taxon>Bacteria</taxon>
        <taxon>Bacillati</taxon>
        <taxon>Bacillota</taxon>
        <taxon>Bacilli</taxon>
        <taxon>Bacillales</taxon>
        <taxon>Bacillaceae</taxon>
        <taxon>Bacillus</taxon>
        <taxon>Bacillus cereus group</taxon>
    </lineage>
</organism>
<dbReference type="EC" id="2.4.2.9" evidence="1"/>
<dbReference type="EMBL" id="CP000764">
    <property type="protein sequence ID" value="ABS24023.1"/>
    <property type="molecule type" value="Genomic_DNA"/>
</dbReference>
<dbReference type="RefSeq" id="WP_012096281.1">
    <property type="nucleotide sequence ID" value="NC_009674.1"/>
</dbReference>
<dbReference type="SMR" id="A7GV65"/>
<dbReference type="STRING" id="315749.Bcer98_3834"/>
<dbReference type="GeneID" id="33899075"/>
<dbReference type="KEGG" id="bcy:Bcer98_3834"/>
<dbReference type="eggNOG" id="COG0035">
    <property type="taxonomic scope" value="Bacteria"/>
</dbReference>
<dbReference type="HOGENOM" id="CLU_067096_2_2_9"/>
<dbReference type="OrthoDB" id="9781675at2"/>
<dbReference type="UniPathway" id="UPA00574">
    <property type="reaction ID" value="UER00636"/>
</dbReference>
<dbReference type="Proteomes" id="UP000002300">
    <property type="component" value="Chromosome"/>
</dbReference>
<dbReference type="GO" id="GO:0005525">
    <property type="term" value="F:GTP binding"/>
    <property type="evidence" value="ECO:0007669"/>
    <property type="project" value="UniProtKB-KW"/>
</dbReference>
<dbReference type="GO" id="GO:0000287">
    <property type="term" value="F:magnesium ion binding"/>
    <property type="evidence" value="ECO:0007669"/>
    <property type="project" value="UniProtKB-UniRule"/>
</dbReference>
<dbReference type="GO" id="GO:0004845">
    <property type="term" value="F:uracil phosphoribosyltransferase activity"/>
    <property type="evidence" value="ECO:0007669"/>
    <property type="project" value="UniProtKB-UniRule"/>
</dbReference>
<dbReference type="GO" id="GO:0044206">
    <property type="term" value="P:UMP salvage"/>
    <property type="evidence" value="ECO:0007669"/>
    <property type="project" value="UniProtKB-UniRule"/>
</dbReference>
<dbReference type="GO" id="GO:0006223">
    <property type="term" value="P:uracil salvage"/>
    <property type="evidence" value="ECO:0007669"/>
    <property type="project" value="InterPro"/>
</dbReference>
<dbReference type="CDD" id="cd06223">
    <property type="entry name" value="PRTases_typeI"/>
    <property type="match status" value="1"/>
</dbReference>
<dbReference type="FunFam" id="3.40.50.2020:FF:000003">
    <property type="entry name" value="Uracil phosphoribosyltransferase"/>
    <property type="match status" value="1"/>
</dbReference>
<dbReference type="Gene3D" id="3.40.50.2020">
    <property type="match status" value="1"/>
</dbReference>
<dbReference type="HAMAP" id="MF_01218_B">
    <property type="entry name" value="Upp_B"/>
    <property type="match status" value="1"/>
</dbReference>
<dbReference type="InterPro" id="IPR000836">
    <property type="entry name" value="PRibTrfase_dom"/>
</dbReference>
<dbReference type="InterPro" id="IPR029057">
    <property type="entry name" value="PRTase-like"/>
</dbReference>
<dbReference type="InterPro" id="IPR034332">
    <property type="entry name" value="Upp_B"/>
</dbReference>
<dbReference type="InterPro" id="IPR050054">
    <property type="entry name" value="UPRTase/APRTase"/>
</dbReference>
<dbReference type="InterPro" id="IPR005765">
    <property type="entry name" value="Ura_phspho_trans"/>
</dbReference>
<dbReference type="NCBIfam" id="NF001097">
    <property type="entry name" value="PRK00129.1"/>
    <property type="match status" value="1"/>
</dbReference>
<dbReference type="NCBIfam" id="TIGR01091">
    <property type="entry name" value="upp"/>
    <property type="match status" value="1"/>
</dbReference>
<dbReference type="PANTHER" id="PTHR32315">
    <property type="entry name" value="ADENINE PHOSPHORIBOSYLTRANSFERASE"/>
    <property type="match status" value="1"/>
</dbReference>
<dbReference type="PANTHER" id="PTHR32315:SF4">
    <property type="entry name" value="URACIL PHOSPHORIBOSYLTRANSFERASE, CHLOROPLASTIC"/>
    <property type="match status" value="1"/>
</dbReference>
<dbReference type="Pfam" id="PF14681">
    <property type="entry name" value="UPRTase"/>
    <property type="match status" value="1"/>
</dbReference>
<dbReference type="SUPFAM" id="SSF53271">
    <property type="entry name" value="PRTase-like"/>
    <property type="match status" value="1"/>
</dbReference>
<accession>A7GV65</accession>